<feature type="chain" id="PRO_0000299818" description="Uncharacterized protein YPR053C">
    <location>
        <begin position="1"/>
        <end position="151"/>
    </location>
</feature>
<reference key="1">
    <citation type="journal article" date="1997" name="Nature">
        <title>The nucleotide sequence of Saccharomyces cerevisiae chromosome XVI.</title>
        <authorList>
            <person name="Bussey H."/>
            <person name="Storms R.K."/>
            <person name="Ahmed A."/>
            <person name="Albermann K."/>
            <person name="Allen E."/>
            <person name="Ansorge W."/>
            <person name="Araujo R."/>
            <person name="Aparicio A."/>
            <person name="Barrell B.G."/>
            <person name="Badcock K."/>
            <person name="Benes V."/>
            <person name="Botstein D."/>
            <person name="Bowman S."/>
            <person name="Brueckner M."/>
            <person name="Carpenter J."/>
            <person name="Cherry J.M."/>
            <person name="Chung E."/>
            <person name="Churcher C.M."/>
            <person name="Coster F."/>
            <person name="Davis K."/>
            <person name="Davis R.W."/>
            <person name="Dietrich F.S."/>
            <person name="Delius H."/>
            <person name="DiPaolo T."/>
            <person name="Dubois E."/>
            <person name="Duesterhoeft A."/>
            <person name="Duncan M."/>
            <person name="Floeth M."/>
            <person name="Fortin N."/>
            <person name="Friesen J.D."/>
            <person name="Fritz C."/>
            <person name="Goffeau A."/>
            <person name="Hall J."/>
            <person name="Hebling U."/>
            <person name="Heumann K."/>
            <person name="Hilbert H."/>
            <person name="Hillier L.W."/>
            <person name="Hunicke-Smith S."/>
            <person name="Hyman R.W."/>
            <person name="Johnston M."/>
            <person name="Kalman S."/>
            <person name="Kleine K."/>
            <person name="Komp C."/>
            <person name="Kurdi O."/>
            <person name="Lashkari D."/>
            <person name="Lew H."/>
            <person name="Lin A."/>
            <person name="Lin D."/>
            <person name="Louis E.J."/>
            <person name="Marathe R."/>
            <person name="Messenguy F."/>
            <person name="Mewes H.-W."/>
            <person name="Mirtipati S."/>
            <person name="Moestl D."/>
            <person name="Mueller-Auer S."/>
            <person name="Namath A."/>
            <person name="Nentwich U."/>
            <person name="Oefner P."/>
            <person name="Pearson D."/>
            <person name="Petel F.X."/>
            <person name="Pohl T.M."/>
            <person name="Purnelle B."/>
            <person name="Rajandream M.A."/>
            <person name="Rechmann S."/>
            <person name="Rieger M."/>
            <person name="Riles L."/>
            <person name="Roberts D."/>
            <person name="Schaefer M."/>
            <person name="Scharfe M."/>
            <person name="Scherens B."/>
            <person name="Schramm S."/>
            <person name="Schroeder M."/>
            <person name="Sdicu A.-M."/>
            <person name="Tettelin H."/>
            <person name="Urrestarazu L.A."/>
            <person name="Ushinsky S."/>
            <person name="Vierendeels F."/>
            <person name="Vissers S."/>
            <person name="Voss H."/>
            <person name="Walsh S.V."/>
            <person name="Wambutt R."/>
            <person name="Wang Y."/>
            <person name="Wedler E."/>
            <person name="Wedler H."/>
            <person name="Winnett E."/>
            <person name="Zhong W.-W."/>
            <person name="Zollner A."/>
            <person name="Vo D.H."/>
            <person name="Hani J."/>
        </authorList>
    </citation>
    <scope>NUCLEOTIDE SEQUENCE [LARGE SCALE GENOMIC DNA]</scope>
    <source>
        <strain>ATCC 204508 / S288c</strain>
    </source>
</reference>
<reference key="2">
    <citation type="journal article" date="2014" name="G3 (Bethesda)">
        <title>The reference genome sequence of Saccharomyces cerevisiae: Then and now.</title>
        <authorList>
            <person name="Engel S.R."/>
            <person name="Dietrich F.S."/>
            <person name="Fisk D.G."/>
            <person name="Binkley G."/>
            <person name="Balakrishnan R."/>
            <person name="Costanzo M.C."/>
            <person name="Dwight S.S."/>
            <person name="Hitz B.C."/>
            <person name="Karra K."/>
            <person name="Nash R.S."/>
            <person name="Weng S."/>
            <person name="Wong E.D."/>
            <person name="Lloyd P."/>
            <person name="Skrzypek M.S."/>
            <person name="Miyasato S.R."/>
            <person name="Simison M."/>
            <person name="Cherry J.M."/>
        </authorList>
    </citation>
    <scope>GENOME REANNOTATION</scope>
    <source>
        <strain>ATCC 204508 / S288c</strain>
    </source>
</reference>
<reference key="3">
    <citation type="journal article" date="2007" name="Genome Res.">
        <title>Approaching a complete repository of sequence-verified protein-encoding clones for Saccharomyces cerevisiae.</title>
        <authorList>
            <person name="Hu Y."/>
            <person name="Rolfs A."/>
            <person name="Bhullar B."/>
            <person name="Murthy T.V.S."/>
            <person name="Zhu C."/>
            <person name="Berger M.F."/>
            <person name="Camargo A.A."/>
            <person name="Kelley F."/>
            <person name="McCarron S."/>
            <person name="Jepson D."/>
            <person name="Richardson A."/>
            <person name="Raphael J."/>
            <person name="Moreira D."/>
            <person name="Taycher E."/>
            <person name="Zuo D."/>
            <person name="Mohr S."/>
            <person name="Kane M.F."/>
            <person name="Williamson J."/>
            <person name="Simpson A.J.G."/>
            <person name="Bulyk M.L."/>
            <person name="Harlow E."/>
            <person name="Marsischky G."/>
            <person name="Kolodner R.D."/>
            <person name="LaBaer J."/>
        </authorList>
    </citation>
    <scope>NUCLEOTIDE SEQUENCE [GENOMIC DNA]</scope>
    <source>
        <strain>ATCC 204508 / S288c</strain>
    </source>
</reference>
<keyword id="KW-1185">Reference proteome</keyword>
<protein>
    <recommendedName>
        <fullName>Uncharacterized protein YPR053C</fullName>
    </recommendedName>
</protein>
<organism>
    <name type="scientific">Saccharomyces cerevisiae (strain ATCC 204508 / S288c)</name>
    <name type="common">Baker's yeast</name>
    <dbReference type="NCBI Taxonomy" id="559292"/>
    <lineage>
        <taxon>Eukaryota</taxon>
        <taxon>Fungi</taxon>
        <taxon>Dikarya</taxon>
        <taxon>Ascomycota</taxon>
        <taxon>Saccharomycotina</taxon>
        <taxon>Saccharomycetes</taxon>
        <taxon>Saccharomycetales</taxon>
        <taxon>Saccharomycetaceae</taxon>
        <taxon>Saccharomyces</taxon>
    </lineage>
</organism>
<proteinExistence type="predicted"/>
<accession>Q6Q5F3</accession>
<accession>A0A1S0T0C7</accession>
<name>YP053_YEAST</name>
<sequence>MMYRTTLNTVQVSQISGAEFYPHASSRAILFESPAFCRLFFSPFVYLAVGKQTTQYLLLVPTVKEGLFWDVFFSCFCSIDYPIHSKAQSQWSPQENLRREPLERRRTQMPLRGLCPPTCFSLTKTEILFVLKIQISHLDKSARSWVRSGRL</sequence>
<gene>
    <name type="ordered locus">YPR053C</name>
</gene>
<dbReference type="EMBL" id="Z49219">
    <property type="status" value="NOT_ANNOTATED_CDS"/>
    <property type="molecule type" value="Genomic_DNA"/>
</dbReference>
<dbReference type="EMBL" id="Z71255">
    <property type="status" value="NOT_ANNOTATED_CDS"/>
    <property type="molecule type" value="Genomic_DNA"/>
</dbReference>
<dbReference type="EMBL" id="AY558142">
    <property type="protein sequence ID" value="AAS56468.1"/>
    <property type="molecule type" value="Genomic_DNA"/>
</dbReference>
<dbReference type="EMBL" id="BK006949">
    <property type="protein sequence ID" value="DAA80345.1"/>
    <property type="molecule type" value="Genomic_DNA"/>
</dbReference>
<dbReference type="RefSeq" id="NP_001335825.1">
    <property type="nucleotide sequence ID" value="NM_001348887.1"/>
</dbReference>
<dbReference type="FunCoup" id="Q6Q5F3">
    <property type="interactions" value="36"/>
</dbReference>
<dbReference type="IntAct" id="Q6Q5F3">
    <property type="interactions" value="1"/>
</dbReference>
<dbReference type="MINT" id="Q6Q5F3"/>
<dbReference type="PaxDb" id="4932-YPR053C"/>
<dbReference type="PeptideAtlas" id="Q6Q5F3"/>
<dbReference type="EnsemblFungi" id="YPR053C_mRNA">
    <property type="protein sequence ID" value="YPR053C"/>
    <property type="gene ID" value="YPR053C"/>
</dbReference>
<dbReference type="GeneID" id="856166"/>
<dbReference type="AGR" id="SGD:S000006257"/>
<dbReference type="SGD" id="S000006257">
    <property type="gene designation" value="YPR053C"/>
</dbReference>
<dbReference type="HOGENOM" id="CLU_1732921_0_0_1"/>
<dbReference type="InParanoid" id="Q6Q5F3"/>
<dbReference type="OMA" id="SQWSPQE"/>
<dbReference type="OrthoDB" id="4047557at2759"/>
<dbReference type="ChiTaRS" id="YPR053C">
    <property type="organism name" value="yeast"/>
</dbReference>
<dbReference type="PRO" id="PR:Q6Q5F3"/>
<dbReference type="Proteomes" id="UP000002311">
    <property type="component" value="Chromosome XVI"/>
</dbReference>
<dbReference type="RNAct" id="Q6Q5F3">
    <property type="molecule type" value="protein"/>
</dbReference>